<sequence length="595" mass="65919">MTGASLALTASVVAHAYYLKNQFYPTVVYLTKSSPSMAILYIQAFVLVFLLGKFMGKVFFGQLRAAEMEHLLERSWYAVTETCLAFTVFRDDFSPRFVALFTLLLFLKCFHWLAEDRVDFMERSPNISWLFHFRILALMLLLGVLDAFFVSHAYNSLVTRGASVQLVFGFEYAILMTMILAVFIKYILHSVDLQSENPWDNKAVYMLYTELFTGFIKVLLYMAFMTIMVKVHTFPLFAIRPMYLAMRQFKKAVTDAVMSRRAIRNMNTLYPDATAEELQAMDNVCIICREEMVSGAKRLPCNHIFHTSCLRSWFQRQQTCPTCRMDVLRASLPTQPQTPAEQQNQHQAQQQPTPVVPPQPNFPPGMLPPFPPGMFPLWPPMGQFPPVPGAPVGNPPDEANPGSSSGSSARAGETSNVGSESHPGAALPGFPFPPPFLGMSILPPFGLPPMPMPPAGFAGLTDEELRAMEGHERQNLEARLQCLQNIHTLLDAAMLQINQYLTVLASIGPPQPPVSSSSSSSASASTEPTTSSVSEPVIDTSSIVTTDSSQQSASPVPVNVETLGGAEGGETPTEEPDNVELRRRRLQKLETTDSQ</sequence>
<proteinExistence type="evidence at transcript level"/>
<gene>
    <name type="primary">syvn1-b</name>
    <name type="synonym">hrd1-b</name>
</gene>
<name>SYVNB_XENLA</name>
<comment type="function">
    <text evidence="2">E3 ubiquitin-protein ligase which accepts ubiquitin specifically from endoplasmic reticulum-associated UBC7 E2 ligase and transfers it to substrates, promoting their degradation. Component of the endoplasmic reticulum quality control (ERQC) system also called ER-associated degradation (ERAD) involved in ubiquitin-dependent degradation of misfolded endoplasmic reticulum proteins. Also promotes the degradation of normal but naturally short-lived proteins. Protects cells from ER stress-induced apoptosis. Sequesters p53 in the cytoplasm and promotes its degradation, thereby negatively regulating its biological function in transcription, cell cycle regulation and apoptosis (By similarity).</text>
</comment>
<comment type="catalytic activity">
    <reaction evidence="2">
        <text>S-ubiquitinyl-[E2 ubiquitin-conjugating enzyme]-L-cysteine + [acceptor protein]-L-lysine = [E2 ubiquitin-conjugating enzyme]-L-cysteine + N(6)-ubiquitinyl-[acceptor protein]-L-lysine.</text>
        <dbReference type="EC" id="2.3.2.27"/>
    </reaction>
</comment>
<comment type="pathway">
    <text>Protein modification; protein ubiquitination.</text>
</comment>
<comment type="subunit">
    <text evidence="2">Homodimer.</text>
</comment>
<comment type="subcellular location">
    <subcellularLocation>
        <location evidence="1">Endoplasmic reticulum membrane</location>
        <topology evidence="2">Multi-pass membrane protein</topology>
    </subcellularLocation>
</comment>
<comment type="domain">
    <text evidence="1">The RING-type zinc finger is required for E3 ligase activity.</text>
</comment>
<comment type="similarity">
    <text evidence="6">Belongs to the HRD1 family.</text>
</comment>
<keyword id="KW-0175">Coiled coil</keyword>
<keyword id="KW-0256">Endoplasmic reticulum</keyword>
<keyword id="KW-0472">Membrane</keyword>
<keyword id="KW-0479">Metal-binding</keyword>
<keyword id="KW-1185">Reference proteome</keyword>
<keyword id="KW-0808">Transferase</keyword>
<keyword id="KW-0812">Transmembrane</keyword>
<keyword id="KW-1133">Transmembrane helix</keyword>
<keyword id="KW-0833">Ubl conjugation pathway</keyword>
<keyword id="KW-0862">Zinc</keyword>
<keyword id="KW-0863">Zinc-finger</keyword>
<feature type="chain" id="PRO_0000280552" description="E3 ubiquitin-protein ligase synoviolin B">
    <location>
        <begin position="1"/>
        <end position="595"/>
    </location>
</feature>
<feature type="transmembrane region" description="Helical" evidence="3">
    <location>
        <begin position="1"/>
        <end position="19"/>
    </location>
</feature>
<feature type="topological domain" description="Lumenal" evidence="6">
    <location>
        <begin position="20"/>
        <end position="35"/>
    </location>
</feature>
<feature type="transmembrane region" description="Helical" evidence="3">
    <location>
        <begin position="36"/>
        <end position="56"/>
    </location>
</feature>
<feature type="topological domain" description="Cytoplasmic" evidence="6">
    <location>
        <begin position="57"/>
        <end position="92"/>
    </location>
</feature>
<feature type="transmembrane region" description="Helical" evidence="3">
    <location>
        <begin position="93"/>
        <end position="113"/>
    </location>
</feature>
<feature type="topological domain" description="Lumenal" evidence="6">
    <location>
        <begin position="114"/>
        <end position="129"/>
    </location>
</feature>
<feature type="transmembrane region" description="Helical" evidence="3">
    <location>
        <begin position="130"/>
        <end position="150"/>
    </location>
</feature>
<feature type="topological domain" description="Cytoplasmic" evidence="6">
    <location>
        <begin position="151"/>
        <end position="163"/>
    </location>
</feature>
<feature type="transmembrane region" description="Helical" evidence="3">
    <location>
        <begin position="164"/>
        <end position="184"/>
    </location>
</feature>
<feature type="topological domain" description="Lumenal" evidence="6">
    <location>
        <begin position="185"/>
        <end position="218"/>
    </location>
</feature>
<feature type="transmembrane region" description="Helical" evidence="3">
    <location>
        <begin position="219"/>
        <end position="239"/>
    </location>
</feature>
<feature type="topological domain" description="Cytoplasmic" evidence="6">
    <location>
        <begin position="240"/>
        <end position="595"/>
    </location>
</feature>
<feature type="zinc finger region" description="RING-type; atypical" evidence="4">
    <location>
        <begin position="285"/>
        <end position="324"/>
    </location>
</feature>
<feature type="region of interest" description="Interaction with p53/TP53" evidence="1">
    <location>
        <begin position="230"/>
        <end position="264"/>
    </location>
</feature>
<feature type="region of interest" description="Disordered" evidence="5">
    <location>
        <begin position="335"/>
        <end position="370"/>
    </location>
</feature>
<feature type="region of interest" description="Disordered" evidence="5">
    <location>
        <begin position="386"/>
        <end position="426"/>
    </location>
</feature>
<feature type="region of interest" description="Disordered" evidence="5">
    <location>
        <begin position="509"/>
        <end position="595"/>
    </location>
</feature>
<feature type="coiled-coil region" evidence="3">
    <location>
        <begin position="463"/>
        <end position="494"/>
    </location>
</feature>
<feature type="compositionally biased region" description="Low complexity" evidence="5">
    <location>
        <begin position="335"/>
        <end position="353"/>
    </location>
</feature>
<feature type="compositionally biased region" description="Pro residues" evidence="5">
    <location>
        <begin position="354"/>
        <end position="370"/>
    </location>
</feature>
<feature type="compositionally biased region" description="Low complexity" evidence="5">
    <location>
        <begin position="390"/>
        <end position="408"/>
    </location>
</feature>
<feature type="compositionally biased region" description="Low complexity" evidence="5">
    <location>
        <begin position="514"/>
        <end position="552"/>
    </location>
</feature>
<feature type="binding site" evidence="2">
    <location>
        <position position="285"/>
    </location>
    <ligand>
        <name>Zn(2+)</name>
        <dbReference type="ChEBI" id="CHEBI:29105"/>
        <label>1</label>
    </ligand>
</feature>
<feature type="binding site" evidence="2">
    <location>
        <position position="288"/>
    </location>
    <ligand>
        <name>Zn(2+)</name>
        <dbReference type="ChEBI" id="CHEBI:29105"/>
        <label>1</label>
    </ligand>
</feature>
<feature type="binding site" evidence="2">
    <location>
        <position position="301"/>
    </location>
    <ligand>
        <name>Zn(2+)</name>
        <dbReference type="ChEBI" id="CHEBI:29105"/>
        <label>2</label>
    </ligand>
</feature>
<feature type="binding site" evidence="2">
    <location>
        <position position="303"/>
    </location>
    <ligand>
        <name>Zn(2+)</name>
        <dbReference type="ChEBI" id="CHEBI:29105"/>
        <label>2</label>
    </ligand>
</feature>
<feature type="binding site" evidence="2">
    <location>
        <position position="306"/>
    </location>
    <ligand>
        <name>Zn(2+)</name>
        <dbReference type="ChEBI" id="CHEBI:29105"/>
        <label>1</label>
    </ligand>
</feature>
<feature type="binding site" evidence="2">
    <location>
        <position position="309"/>
    </location>
    <ligand>
        <name>Zn(2+)</name>
        <dbReference type="ChEBI" id="CHEBI:29105"/>
        <label>1</label>
    </ligand>
</feature>
<feature type="binding site" evidence="2">
    <location>
        <position position="320"/>
    </location>
    <ligand>
        <name>Zn(2+)</name>
        <dbReference type="ChEBI" id="CHEBI:29105"/>
        <label>2</label>
    </ligand>
</feature>
<feature type="binding site" evidence="2">
    <location>
        <position position="323"/>
    </location>
    <ligand>
        <name>Zn(2+)</name>
        <dbReference type="ChEBI" id="CHEBI:29105"/>
        <label>2</label>
    </ligand>
</feature>
<reference key="1">
    <citation type="submission" date="2004-10" db="EMBL/GenBank/DDBJ databases">
        <authorList>
            <consortium name="NIH - Xenopus Gene Collection (XGC) project"/>
        </authorList>
    </citation>
    <scope>NUCLEOTIDE SEQUENCE [LARGE SCALE MRNA]</scope>
    <source>
        <tissue>Kidney</tissue>
    </source>
</reference>
<dbReference type="EC" id="2.3.2.27" evidence="2"/>
<dbReference type="EMBL" id="BC084080">
    <property type="protein sequence ID" value="AAH84080.1"/>
    <property type="molecule type" value="mRNA"/>
</dbReference>
<dbReference type="RefSeq" id="NP_001088172.1">
    <property type="nucleotide sequence ID" value="NM_001094703.1"/>
</dbReference>
<dbReference type="SMR" id="Q5XHH7"/>
<dbReference type="DNASU" id="494996"/>
<dbReference type="GeneID" id="494996"/>
<dbReference type="KEGG" id="xla:494996"/>
<dbReference type="AGR" id="Xenbase:XB-GENE-6254740"/>
<dbReference type="CTD" id="494996"/>
<dbReference type="Xenbase" id="XB-GENE-6254740">
    <property type="gene designation" value="syvn1.S"/>
</dbReference>
<dbReference type="OrthoDB" id="7759664at2759"/>
<dbReference type="UniPathway" id="UPA00143"/>
<dbReference type="Proteomes" id="UP000186698">
    <property type="component" value="Chromosome 4S"/>
</dbReference>
<dbReference type="Bgee" id="494996">
    <property type="expression patterns" value="Expressed in testis and 20 other cell types or tissues"/>
</dbReference>
<dbReference type="GO" id="GO:0012505">
    <property type="term" value="C:endomembrane system"/>
    <property type="evidence" value="ECO:0000318"/>
    <property type="project" value="GO_Central"/>
</dbReference>
<dbReference type="GO" id="GO:0005789">
    <property type="term" value="C:endoplasmic reticulum membrane"/>
    <property type="evidence" value="ECO:0007669"/>
    <property type="project" value="UniProtKB-SubCell"/>
</dbReference>
<dbReference type="GO" id="GO:0044322">
    <property type="term" value="C:endoplasmic reticulum quality control compartment"/>
    <property type="evidence" value="ECO:0000318"/>
    <property type="project" value="GO_Central"/>
</dbReference>
<dbReference type="GO" id="GO:0061630">
    <property type="term" value="F:ubiquitin protein ligase activity"/>
    <property type="evidence" value="ECO:0000250"/>
    <property type="project" value="UniProtKB"/>
</dbReference>
<dbReference type="GO" id="GO:0008270">
    <property type="term" value="F:zinc ion binding"/>
    <property type="evidence" value="ECO:0007669"/>
    <property type="project" value="UniProtKB-KW"/>
</dbReference>
<dbReference type="GO" id="GO:0036503">
    <property type="term" value="P:ERAD pathway"/>
    <property type="evidence" value="ECO:0000250"/>
    <property type="project" value="UniProtKB"/>
</dbReference>
<dbReference type="GO" id="GO:0043161">
    <property type="term" value="P:proteasome-mediated ubiquitin-dependent protein catabolic process"/>
    <property type="evidence" value="ECO:0000318"/>
    <property type="project" value="GO_Central"/>
</dbReference>
<dbReference type="GO" id="GO:0016567">
    <property type="term" value="P:protein ubiquitination"/>
    <property type="evidence" value="ECO:0007669"/>
    <property type="project" value="UniProtKB-UniPathway"/>
</dbReference>
<dbReference type="GO" id="GO:0006511">
    <property type="term" value="P:ubiquitin-dependent protein catabolic process"/>
    <property type="evidence" value="ECO:0000250"/>
    <property type="project" value="UniProtKB"/>
</dbReference>
<dbReference type="CDD" id="cd16479">
    <property type="entry name" value="RING-H2_synoviolin"/>
    <property type="match status" value="1"/>
</dbReference>
<dbReference type="FunFam" id="3.30.40.10:FF:000088">
    <property type="entry name" value="E3 ubiquitin-protein ligase synoviolin"/>
    <property type="match status" value="1"/>
</dbReference>
<dbReference type="Gene3D" id="3.30.40.10">
    <property type="entry name" value="Zinc/RING finger domain, C3HC4 (zinc finger)"/>
    <property type="match status" value="1"/>
</dbReference>
<dbReference type="InterPro" id="IPR050731">
    <property type="entry name" value="HRD1_E3_ubiq-ligases"/>
</dbReference>
<dbReference type="InterPro" id="IPR001841">
    <property type="entry name" value="Znf_RING"/>
</dbReference>
<dbReference type="InterPro" id="IPR013083">
    <property type="entry name" value="Znf_RING/FYVE/PHD"/>
</dbReference>
<dbReference type="PANTHER" id="PTHR22763:SF184">
    <property type="entry name" value="E3 UBIQUITIN-PROTEIN LIGASE SYNOVIOLIN"/>
    <property type="match status" value="1"/>
</dbReference>
<dbReference type="PANTHER" id="PTHR22763">
    <property type="entry name" value="RING ZINC FINGER PROTEIN"/>
    <property type="match status" value="1"/>
</dbReference>
<dbReference type="Pfam" id="PF13639">
    <property type="entry name" value="zf-RING_2"/>
    <property type="match status" value="1"/>
</dbReference>
<dbReference type="SMART" id="SM00184">
    <property type="entry name" value="RING"/>
    <property type="match status" value="1"/>
</dbReference>
<dbReference type="SUPFAM" id="SSF57850">
    <property type="entry name" value="RING/U-box"/>
    <property type="match status" value="1"/>
</dbReference>
<dbReference type="PROSITE" id="PS50089">
    <property type="entry name" value="ZF_RING_2"/>
    <property type="match status" value="1"/>
</dbReference>
<protein>
    <recommendedName>
        <fullName>E3 ubiquitin-protein ligase synoviolin B</fullName>
        <ecNumber evidence="2">2.3.2.27</ecNumber>
    </recommendedName>
    <alternativeName>
        <fullName evidence="6">RING-type E3 ubiquitin transferase synoviolin B</fullName>
    </alternativeName>
    <alternativeName>
        <fullName>Synovial apoptosis inhibitor 1-B</fullName>
    </alternativeName>
</protein>
<organism>
    <name type="scientific">Xenopus laevis</name>
    <name type="common">African clawed frog</name>
    <dbReference type="NCBI Taxonomy" id="8355"/>
    <lineage>
        <taxon>Eukaryota</taxon>
        <taxon>Metazoa</taxon>
        <taxon>Chordata</taxon>
        <taxon>Craniata</taxon>
        <taxon>Vertebrata</taxon>
        <taxon>Euteleostomi</taxon>
        <taxon>Amphibia</taxon>
        <taxon>Batrachia</taxon>
        <taxon>Anura</taxon>
        <taxon>Pipoidea</taxon>
        <taxon>Pipidae</taxon>
        <taxon>Xenopodinae</taxon>
        <taxon>Xenopus</taxon>
        <taxon>Xenopus</taxon>
    </lineage>
</organism>
<evidence type="ECO:0000250" key="1"/>
<evidence type="ECO:0000250" key="2">
    <source>
        <dbReference type="UniProtKB" id="Q86TM6"/>
    </source>
</evidence>
<evidence type="ECO:0000255" key="3"/>
<evidence type="ECO:0000255" key="4">
    <source>
        <dbReference type="PROSITE-ProRule" id="PRU00175"/>
    </source>
</evidence>
<evidence type="ECO:0000256" key="5">
    <source>
        <dbReference type="SAM" id="MobiDB-lite"/>
    </source>
</evidence>
<evidence type="ECO:0000305" key="6"/>
<accession>Q5XHH7</accession>